<comment type="function">
    <text evidence="1">Catalyzes both the ATP-dependent activation of exogenously supplied lipoate to lipoyl-AMP and the transfer of the activated lipoyl onto the lipoyl domains of lipoate-dependent enzymes.</text>
</comment>
<comment type="catalytic activity">
    <reaction evidence="1">
        <text>L-lysyl-[lipoyl-carrier protein] + (R)-lipoate + ATP = N(6)-[(R)-lipoyl]-L-lysyl-[lipoyl-carrier protein] + AMP + diphosphate + H(+)</text>
        <dbReference type="Rhea" id="RHEA:49288"/>
        <dbReference type="Rhea" id="RHEA-COMP:10500"/>
        <dbReference type="Rhea" id="RHEA-COMP:10502"/>
        <dbReference type="ChEBI" id="CHEBI:15378"/>
        <dbReference type="ChEBI" id="CHEBI:29969"/>
        <dbReference type="ChEBI" id="CHEBI:30616"/>
        <dbReference type="ChEBI" id="CHEBI:33019"/>
        <dbReference type="ChEBI" id="CHEBI:83088"/>
        <dbReference type="ChEBI" id="CHEBI:83099"/>
        <dbReference type="ChEBI" id="CHEBI:456215"/>
        <dbReference type="EC" id="6.3.1.20"/>
    </reaction>
</comment>
<comment type="pathway">
    <text evidence="1">Protein modification; protein lipoylation via exogenous pathway; protein N(6)-(lipoyl)lysine from lipoate: step 1/2.</text>
</comment>
<comment type="pathway">
    <text evidence="1">Protein modification; protein lipoylation via exogenous pathway; protein N(6)-(lipoyl)lysine from lipoate: step 2/2.</text>
</comment>
<comment type="subunit">
    <text evidence="1">Monomer.</text>
</comment>
<comment type="subcellular location">
    <subcellularLocation>
        <location evidence="1">Cytoplasm</location>
    </subcellularLocation>
</comment>
<comment type="miscellaneous">
    <text evidence="1">In the transfer reaction, the free carboxyl group of lipoic acid is attached via an amide linkage to the epsilon-amino group of a specific lysine residue of lipoyl domains of lipoate-dependent enzymes.</text>
</comment>
<comment type="similarity">
    <text evidence="1">Belongs to the LplA family.</text>
</comment>
<dbReference type="EC" id="6.3.1.20" evidence="1"/>
<dbReference type="EMBL" id="CP001113">
    <property type="protein sequence ID" value="ACF62330.1"/>
    <property type="molecule type" value="Genomic_DNA"/>
</dbReference>
<dbReference type="RefSeq" id="WP_000209753.1">
    <property type="nucleotide sequence ID" value="NC_011080.1"/>
</dbReference>
<dbReference type="SMR" id="B4T4I0"/>
<dbReference type="KEGG" id="see:SNSL254_A4933"/>
<dbReference type="HOGENOM" id="CLU_022986_0_1_6"/>
<dbReference type="UniPathway" id="UPA00537">
    <property type="reaction ID" value="UER00594"/>
</dbReference>
<dbReference type="UniPathway" id="UPA00537">
    <property type="reaction ID" value="UER00595"/>
</dbReference>
<dbReference type="Proteomes" id="UP000008824">
    <property type="component" value="Chromosome"/>
</dbReference>
<dbReference type="GO" id="GO:0005829">
    <property type="term" value="C:cytosol"/>
    <property type="evidence" value="ECO:0007669"/>
    <property type="project" value="TreeGrafter"/>
</dbReference>
<dbReference type="GO" id="GO:0005524">
    <property type="term" value="F:ATP binding"/>
    <property type="evidence" value="ECO:0007669"/>
    <property type="project" value="UniProtKB-KW"/>
</dbReference>
<dbReference type="GO" id="GO:0016979">
    <property type="term" value="F:lipoate-protein ligase activity"/>
    <property type="evidence" value="ECO:0007669"/>
    <property type="project" value="UniProtKB-UniRule"/>
</dbReference>
<dbReference type="GO" id="GO:0017118">
    <property type="term" value="F:lipoyltransferase activity"/>
    <property type="evidence" value="ECO:0007669"/>
    <property type="project" value="TreeGrafter"/>
</dbReference>
<dbReference type="GO" id="GO:0036211">
    <property type="term" value="P:protein modification process"/>
    <property type="evidence" value="ECO:0007669"/>
    <property type="project" value="InterPro"/>
</dbReference>
<dbReference type="CDD" id="cd16443">
    <property type="entry name" value="LplA"/>
    <property type="match status" value="1"/>
</dbReference>
<dbReference type="FunFam" id="3.30.390.50:FF:000002">
    <property type="entry name" value="Lipoate-protein ligase A"/>
    <property type="match status" value="1"/>
</dbReference>
<dbReference type="FunFam" id="3.30.930.10:FF:000024">
    <property type="entry name" value="Lipoate-protein ligase A"/>
    <property type="match status" value="1"/>
</dbReference>
<dbReference type="Gene3D" id="3.30.930.10">
    <property type="entry name" value="Bira Bifunctional Protein, Domain 2"/>
    <property type="match status" value="1"/>
</dbReference>
<dbReference type="Gene3D" id="3.30.390.50">
    <property type="entry name" value="CO dehydrogenase flavoprotein, C-terminal domain"/>
    <property type="match status" value="1"/>
</dbReference>
<dbReference type="HAMAP" id="MF_01602">
    <property type="entry name" value="LplA"/>
    <property type="match status" value="1"/>
</dbReference>
<dbReference type="InterPro" id="IPR045864">
    <property type="entry name" value="aa-tRNA-synth_II/BPL/LPL"/>
</dbReference>
<dbReference type="InterPro" id="IPR004143">
    <property type="entry name" value="BPL_LPL_catalytic"/>
</dbReference>
<dbReference type="InterPro" id="IPR023741">
    <property type="entry name" value="Lipoate_ligase_A"/>
</dbReference>
<dbReference type="InterPro" id="IPR019491">
    <property type="entry name" value="Lipoate_protein_ligase_C"/>
</dbReference>
<dbReference type="InterPro" id="IPR004562">
    <property type="entry name" value="LipoylTrfase_LipoateP_Ligase"/>
</dbReference>
<dbReference type="NCBIfam" id="TIGR00545">
    <property type="entry name" value="lipoyltrans"/>
    <property type="match status" value="1"/>
</dbReference>
<dbReference type="PANTHER" id="PTHR12561">
    <property type="entry name" value="LIPOATE-PROTEIN LIGASE"/>
    <property type="match status" value="1"/>
</dbReference>
<dbReference type="PANTHER" id="PTHR12561:SF3">
    <property type="entry name" value="LIPOYLTRANSFERASE 1, MITOCHONDRIAL"/>
    <property type="match status" value="1"/>
</dbReference>
<dbReference type="Pfam" id="PF10437">
    <property type="entry name" value="Lip_prot_lig_C"/>
    <property type="match status" value="1"/>
</dbReference>
<dbReference type="Pfam" id="PF21948">
    <property type="entry name" value="LplA-B_cat"/>
    <property type="match status" value="1"/>
</dbReference>
<dbReference type="SUPFAM" id="SSF55681">
    <property type="entry name" value="Class II aaRS and biotin synthetases"/>
    <property type="match status" value="1"/>
</dbReference>
<dbReference type="SUPFAM" id="SSF82649">
    <property type="entry name" value="SufE/NifU"/>
    <property type="match status" value="1"/>
</dbReference>
<dbReference type="PROSITE" id="PS51733">
    <property type="entry name" value="BPL_LPL_CATALYTIC"/>
    <property type="match status" value="1"/>
</dbReference>
<protein>
    <recommendedName>
        <fullName evidence="1">Lipoate-protein ligase A</fullName>
        <ecNumber evidence="1">6.3.1.20</ecNumber>
    </recommendedName>
    <alternativeName>
        <fullName evidence="1">Lipoate--protein ligase</fullName>
    </alternativeName>
</protein>
<name>LPLA_SALNS</name>
<reference key="1">
    <citation type="journal article" date="2011" name="J. Bacteriol.">
        <title>Comparative genomics of 28 Salmonella enterica isolates: evidence for CRISPR-mediated adaptive sublineage evolution.</title>
        <authorList>
            <person name="Fricke W.F."/>
            <person name="Mammel M.K."/>
            <person name="McDermott P.F."/>
            <person name="Tartera C."/>
            <person name="White D.G."/>
            <person name="Leclerc J.E."/>
            <person name="Ravel J."/>
            <person name="Cebula T.A."/>
        </authorList>
    </citation>
    <scope>NUCLEOTIDE SEQUENCE [LARGE SCALE GENOMIC DNA]</scope>
    <source>
        <strain>SL254</strain>
    </source>
</reference>
<organism>
    <name type="scientific">Salmonella newport (strain SL254)</name>
    <dbReference type="NCBI Taxonomy" id="423368"/>
    <lineage>
        <taxon>Bacteria</taxon>
        <taxon>Pseudomonadati</taxon>
        <taxon>Pseudomonadota</taxon>
        <taxon>Gammaproteobacteria</taxon>
        <taxon>Enterobacterales</taxon>
        <taxon>Enterobacteriaceae</taxon>
        <taxon>Salmonella</taxon>
    </lineage>
</organism>
<accession>B4T4I0</accession>
<keyword id="KW-0067">ATP-binding</keyword>
<keyword id="KW-0963">Cytoplasm</keyword>
<keyword id="KW-0436">Ligase</keyword>
<keyword id="KW-0547">Nucleotide-binding</keyword>
<feature type="chain" id="PRO_1000148115" description="Lipoate-protein ligase A">
    <location>
        <begin position="1"/>
        <end position="338"/>
    </location>
</feature>
<feature type="domain" description="BPL/LPL catalytic" evidence="2">
    <location>
        <begin position="29"/>
        <end position="216"/>
    </location>
</feature>
<feature type="binding site" evidence="1">
    <location>
        <position position="71"/>
    </location>
    <ligand>
        <name>ATP</name>
        <dbReference type="ChEBI" id="CHEBI:30616"/>
    </ligand>
</feature>
<feature type="binding site" evidence="1">
    <location>
        <begin position="76"/>
        <end position="79"/>
    </location>
    <ligand>
        <name>ATP</name>
        <dbReference type="ChEBI" id="CHEBI:30616"/>
    </ligand>
</feature>
<feature type="binding site" evidence="1">
    <location>
        <position position="134"/>
    </location>
    <ligand>
        <name>(R)-lipoate</name>
        <dbReference type="ChEBI" id="CHEBI:83088"/>
    </ligand>
</feature>
<feature type="binding site" evidence="1">
    <location>
        <position position="134"/>
    </location>
    <ligand>
        <name>ATP</name>
        <dbReference type="ChEBI" id="CHEBI:30616"/>
    </ligand>
</feature>
<evidence type="ECO:0000255" key="1">
    <source>
        <dbReference type="HAMAP-Rule" id="MF_01602"/>
    </source>
</evidence>
<evidence type="ECO:0000255" key="2">
    <source>
        <dbReference type="PROSITE-ProRule" id="PRU01067"/>
    </source>
</evidence>
<sequence>MTTLRLLISDSYDPWFNLAVEECIFRQMPATQRVLFLWRNADTVVIGRAQNPWKECNTRRMEEDNVRLARRSSGGGAVFHDLGNTCFTFMAGKPEYDKTISTHIVLAALNSLGVMADASGRNDLVVKTPDGDRKVSGSAYRETKDRGFHHGTLLLNADLSRLAIYLNPDKKKLAAKGITSVRSRVANLTELLPGITHKQVCQAVTEAFFVHYGERVDAEVISPDKTPDLPNFAETFARQSSWEWNFGQAPAFSHLLDERFTWGGVELHFDVEKGVITRAQVFTDSLNPAPLEALAERLQGCLYRADKLQETCEALLVDFPEQEKELRELSAWIAEAVR</sequence>
<proteinExistence type="inferred from homology"/>
<gene>
    <name evidence="1" type="primary">lplA</name>
    <name type="ordered locus">SNSL254_A4933</name>
</gene>